<evidence type="ECO:0000250" key="1">
    <source>
        <dbReference type="UniProtKB" id="P11986"/>
    </source>
</evidence>
<evidence type="ECO:0000250" key="2">
    <source>
        <dbReference type="UniProtKB" id="P42801"/>
    </source>
</evidence>
<evidence type="ECO:0000305" key="3"/>
<name>INO1_MESCR</name>
<comment type="function">
    <text evidence="2">Key enzyme in myo-inositol biosynthesis pathway that catalyzes the conversion of glucose 6-phosphate to 1-myo-inositol 1-phosphate in a NAD-dependent manner.</text>
</comment>
<comment type="catalytic activity">
    <reaction evidence="2">
        <text>D-glucose 6-phosphate = 1D-myo-inositol 3-phosphate</text>
        <dbReference type="Rhea" id="RHEA:10716"/>
        <dbReference type="ChEBI" id="CHEBI:58401"/>
        <dbReference type="ChEBI" id="CHEBI:61548"/>
        <dbReference type="EC" id="5.5.1.4"/>
    </reaction>
</comment>
<comment type="cofactor">
    <cofactor evidence="2">
        <name>NAD(+)</name>
        <dbReference type="ChEBI" id="CHEBI:57540"/>
    </cofactor>
</comment>
<comment type="pathway">
    <text>Polyol metabolism; myo-inositol biosynthesis; myo-inositol from D-glucose 6-phosphate: step 1/2.</text>
</comment>
<comment type="subcellular location">
    <subcellularLocation>
        <location evidence="2">Cytoplasm</location>
        <location evidence="2">Cytosol</location>
    </subcellularLocation>
    <subcellularLocation>
        <location evidence="2">Nucleus</location>
    </subcellularLocation>
</comment>
<comment type="similarity">
    <text evidence="3">Belongs to the myo-inositol 1-phosphate synthase family.</text>
</comment>
<proteinExistence type="evidence at transcript level"/>
<organism>
    <name type="scientific">Mesembryanthemum crystallinum</name>
    <name type="common">Common ice plant</name>
    <name type="synonym">Cryophytum crystallinum</name>
    <dbReference type="NCBI Taxonomy" id="3544"/>
    <lineage>
        <taxon>Eukaryota</taxon>
        <taxon>Viridiplantae</taxon>
        <taxon>Streptophyta</taxon>
        <taxon>Embryophyta</taxon>
        <taxon>Tracheophyta</taxon>
        <taxon>Spermatophyta</taxon>
        <taxon>Magnoliopsida</taxon>
        <taxon>eudicotyledons</taxon>
        <taxon>Gunneridae</taxon>
        <taxon>Pentapetalae</taxon>
        <taxon>Caryophyllales</taxon>
        <taxon>Aizoaceae</taxon>
        <taxon>Mesembryanthemum</taxon>
        <taxon>Mesembryanthemum subgen. Cryophytum</taxon>
    </lineage>
</organism>
<dbReference type="EC" id="5.5.1.4" evidence="2"/>
<dbReference type="EMBL" id="U32511">
    <property type="protein sequence ID" value="AAB03687.1"/>
    <property type="molecule type" value="mRNA"/>
</dbReference>
<dbReference type="PIR" id="T12438">
    <property type="entry name" value="T12438"/>
</dbReference>
<dbReference type="SMR" id="Q40271"/>
<dbReference type="UniPathway" id="UPA00823">
    <property type="reaction ID" value="UER00787"/>
</dbReference>
<dbReference type="GO" id="GO:0005829">
    <property type="term" value="C:cytosol"/>
    <property type="evidence" value="ECO:0007669"/>
    <property type="project" value="UniProtKB-SubCell"/>
</dbReference>
<dbReference type="GO" id="GO:0005634">
    <property type="term" value="C:nucleus"/>
    <property type="evidence" value="ECO:0007669"/>
    <property type="project" value="UniProtKB-SubCell"/>
</dbReference>
<dbReference type="GO" id="GO:0004512">
    <property type="term" value="F:inositol-3-phosphate synthase activity"/>
    <property type="evidence" value="ECO:0007669"/>
    <property type="project" value="UniProtKB-EC"/>
</dbReference>
<dbReference type="GO" id="GO:0006021">
    <property type="term" value="P:inositol biosynthetic process"/>
    <property type="evidence" value="ECO:0007669"/>
    <property type="project" value="UniProtKB-UniPathway"/>
</dbReference>
<dbReference type="GO" id="GO:0008654">
    <property type="term" value="P:phospholipid biosynthetic process"/>
    <property type="evidence" value="ECO:0007669"/>
    <property type="project" value="UniProtKB-KW"/>
</dbReference>
<dbReference type="FunFam" id="3.40.50.720:FF:000107">
    <property type="entry name" value="inositol-3-phosphate synthase"/>
    <property type="match status" value="1"/>
</dbReference>
<dbReference type="FunFam" id="3.40.50.720:FF:000069">
    <property type="entry name" value="Inositol-3-phosphate synthase 1"/>
    <property type="match status" value="1"/>
</dbReference>
<dbReference type="FunFam" id="3.30.360.10:FF:000055">
    <property type="entry name" value="Putative myo-inositol-1-phosphate synthase"/>
    <property type="match status" value="1"/>
</dbReference>
<dbReference type="Gene3D" id="3.40.50.720">
    <property type="entry name" value="NAD(P)-binding Rossmann-like Domain"/>
    <property type="match status" value="2"/>
</dbReference>
<dbReference type="InterPro" id="IPR002587">
    <property type="entry name" value="Myo-inos-1-P_Synthase"/>
</dbReference>
<dbReference type="InterPro" id="IPR013021">
    <property type="entry name" value="Myo-inos-1-P_Synthase_GAPDH"/>
</dbReference>
<dbReference type="InterPro" id="IPR036291">
    <property type="entry name" value="NAD(P)-bd_dom_sf"/>
</dbReference>
<dbReference type="PANTHER" id="PTHR11510">
    <property type="entry name" value="MYO-INOSITOL-1 PHOSPHATE SYNTHASE"/>
    <property type="match status" value="1"/>
</dbReference>
<dbReference type="Pfam" id="PF01658">
    <property type="entry name" value="Inos-1-P_synth"/>
    <property type="match status" value="1"/>
</dbReference>
<dbReference type="Pfam" id="PF07994">
    <property type="entry name" value="NAD_binding_5"/>
    <property type="match status" value="1"/>
</dbReference>
<dbReference type="PIRSF" id="PIRSF015578">
    <property type="entry name" value="Myoinos-ppht_syn"/>
    <property type="match status" value="1"/>
</dbReference>
<dbReference type="SUPFAM" id="SSF55347">
    <property type="entry name" value="Glyceraldehyde-3-phosphate dehydrogenase-like, C-terminal domain"/>
    <property type="match status" value="1"/>
</dbReference>
<dbReference type="SUPFAM" id="SSF51735">
    <property type="entry name" value="NAD(P)-binding Rossmann-fold domains"/>
    <property type="match status" value="1"/>
</dbReference>
<protein>
    <recommendedName>
        <fullName>Inositol-3-phosphate synthase</fullName>
        <shortName>MIP synthase</shortName>
        <ecNumber evidence="2">5.5.1.4</ecNumber>
    </recommendedName>
    <alternativeName>
        <fullName>Myo-inositol 1-phosphate synthase</fullName>
        <shortName>IPS</shortName>
        <shortName>MI-1-P synthase</shortName>
    </alternativeName>
</protein>
<feature type="chain" id="PRO_0000195193" description="Inositol-3-phosphate synthase">
    <location>
        <begin position="1"/>
        <end position="512"/>
    </location>
</feature>
<feature type="binding site" evidence="1">
    <location>
        <position position="72"/>
    </location>
    <ligand>
        <name>NAD(+)</name>
        <dbReference type="ChEBI" id="CHEBI:57540"/>
    </ligand>
</feature>
<feature type="binding site" evidence="1">
    <location>
        <position position="73"/>
    </location>
    <ligand>
        <name>NAD(+)</name>
        <dbReference type="ChEBI" id="CHEBI:57540"/>
    </ligand>
</feature>
<feature type="binding site" evidence="1">
    <location>
        <position position="74"/>
    </location>
    <ligand>
        <name>NAD(+)</name>
        <dbReference type="ChEBI" id="CHEBI:57540"/>
    </ligand>
</feature>
<feature type="binding site" evidence="1">
    <location>
        <position position="75"/>
    </location>
    <ligand>
        <name>NAD(+)</name>
        <dbReference type="ChEBI" id="CHEBI:57540"/>
    </ligand>
</feature>
<feature type="binding site" evidence="1">
    <location>
        <position position="145"/>
    </location>
    <ligand>
        <name>NAD(+)</name>
        <dbReference type="ChEBI" id="CHEBI:57540"/>
    </ligand>
</feature>
<feature type="binding site" evidence="1">
    <location>
        <position position="182"/>
    </location>
    <ligand>
        <name>NAD(+)</name>
        <dbReference type="ChEBI" id="CHEBI:57540"/>
    </ligand>
</feature>
<feature type="binding site" evidence="1">
    <location>
        <position position="192"/>
    </location>
    <ligand>
        <name>NAD(+)</name>
        <dbReference type="ChEBI" id="CHEBI:57540"/>
    </ligand>
</feature>
<feature type="binding site" evidence="1">
    <location>
        <position position="195"/>
    </location>
    <ligand>
        <name>NAD(+)</name>
        <dbReference type="ChEBI" id="CHEBI:57540"/>
    </ligand>
</feature>
<feature type="binding site" evidence="1">
    <location>
        <position position="232"/>
    </location>
    <ligand>
        <name>NAD(+)</name>
        <dbReference type="ChEBI" id="CHEBI:57540"/>
    </ligand>
</feature>
<feature type="binding site" evidence="1">
    <location>
        <position position="233"/>
    </location>
    <ligand>
        <name>NAD(+)</name>
        <dbReference type="ChEBI" id="CHEBI:57540"/>
    </ligand>
</feature>
<feature type="binding site" evidence="1">
    <location>
        <position position="234"/>
    </location>
    <ligand>
        <name>NAD(+)</name>
        <dbReference type="ChEBI" id="CHEBI:57540"/>
    </ligand>
</feature>
<feature type="binding site" evidence="1">
    <location>
        <position position="235"/>
    </location>
    <ligand>
        <name>NAD(+)</name>
        <dbReference type="ChEBI" id="CHEBI:57540"/>
    </ligand>
</feature>
<feature type="binding site" evidence="1">
    <location>
        <position position="283"/>
    </location>
    <ligand>
        <name>NAD(+)</name>
        <dbReference type="ChEBI" id="CHEBI:57540"/>
    </ligand>
</feature>
<feature type="binding site" evidence="1">
    <location>
        <position position="284"/>
    </location>
    <ligand>
        <name>NAD(+)</name>
        <dbReference type="ChEBI" id="CHEBI:57540"/>
    </ligand>
</feature>
<feature type="binding site" evidence="1">
    <location>
        <position position="308"/>
    </location>
    <ligand>
        <name>NAD(+)</name>
        <dbReference type="ChEBI" id="CHEBI:57540"/>
    </ligand>
</feature>
<feature type="binding site" evidence="1">
    <location>
        <position position="311"/>
    </location>
    <ligand>
        <name>NAD(+)</name>
        <dbReference type="ChEBI" id="CHEBI:57540"/>
    </ligand>
</feature>
<feature type="binding site" evidence="1">
    <location>
        <position position="342"/>
    </location>
    <ligand>
        <name>NAD(+)</name>
        <dbReference type="ChEBI" id="CHEBI:57540"/>
    </ligand>
</feature>
<feature type="binding site" evidence="1">
    <location>
        <position position="343"/>
    </location>
    <ligand>
        <name>NAD(+)</name>
        <dbReference type="ChEBI" id="CHEBI:57540"/>
    </ligand>
</feature>
<feature type="binding site" evidence="1">
    <location>
        <position position="344"/>
    </location>
    <ligand>
        <name>NAD(+)</name>
        <dbReference type="ChEBI" id="CHEBI:57540"/>
    </ligand>
</feature>
<feature type="binding site" evidence="1">
    <location>
        <position position="357"/>
    </location>
    <ligand>
        <name>NAD(+)</name>
        <dbReference type="ChEBI" id="CHEBI:57540"/>
    </ligand>
</feature>
<feature type="binding site" evidence="1">
    <location>
        <position position="395"/>
    </location>
    <ligand>
        <name>NAD(+)</name>
        <dbReference type="ChEBI" id="CHEBI:57540"/>
    </ligand>
</feature>
<feature type="binding site" evidence="1">
    <location>
        <position position="396"/>
    </location>
    <ligand>
        <name>NAD(+)</name>
        <dbReference type="ChEBI" id="CHEBI:57540"/>
    </ligand>
</feature>
<feature type="binding site" evidence="1">
    <location>
        <position position="424"/>
    </location>
    <ligand>
        <name>NAD(+)</name>
        <dbReference type="ChEBI" id="CHEBI:57540"/>
    </ligand>
</feature>
<feature type="binding site" evidence="1">
    <location>
        <position position="425"/>
    </location>
    <ligand>
        <name>NAD(+)</name>
        <dbReference type="ChEBI" id="CHEBI:57540"/>
    </ligand>
</feature>
<keyword id="KW-0963">Cytoplasm</keyword>
<keyword id="KW-0398">Inositol biosynthesis</keyword>
<keyword id="KW-0413">Isomerase</keyword>
<keyword id="KW-0444">Lipid biosynthesis</keyword>
<keyword id="KW-0443">Lipid metabolism</keyword>
<keyword id="KW-0520">NAD</keyword>
<keyword id="KW-0539">Nucleus</keyword>
<keyword id="KW-0594">Phospholipid biosynthesis</keyword>
<keyword id="KW-1208">Phospholipid metabolism</keyword>
<reference key="1">
    <citation type="journal article" date="1996" name="Plant J.">
        <title>Coordinate transcriptional induction of myo-inositol metabolism during environmental stress.</title>
        <authorList>
            <person name="Ishitani M."/>
            <person name="Majumder A.L."/>
            <person name="Bornhouser A."/>
            <person name="Michalowski C.B."/>
            <person name="Jensen R.G."/>
            <person name="Bohnert H.J."/>
        </authorList>
    </citation>
    <scope>NUCLEOTIDE SEQUENCE [MRNA]</scope>
</reference>
<sequence>MFIESFKVESPNVKYTENEIESVYNYDTTELVHENRKDAGGYQWIVKPKTVQYHFKTDTRVPKLGVMLVGWGGNNGSTLTGGVIANREGISWATKDKIQQANYFGSLTQASSIRVGSFNGEEIYAPFKSLLPMVNPDDVVFGGWDISDMNLADAMTRARVFDIDLQKQLRPYMEHMVPLPGIYDPDFIAANQGSRANNVIKGTKKEQVERVIKDIREFKEKNKVDKVVVLWTGNTERYSNVVVGLNDTMENLLASLEKNESEISPSTSYALACIEENIPFINGSPQNTFVPGLIDLAIKKNSLIGGDDFKSGQTKMKSVLVDFLVGAGIKPTSIVSYNHLGNNDGMNLSAPQTFRSKEISKSNVVDDMVASNGILYEPGEHPDHVVVIKYVPYVGDSKRAMDEYTSEIFMGGTNTIVMHNTCEDSLLAAPIILDLVLLAELSTRIQLKAEEEDKFHSFHPVATILSYLTKAPLVPPGTPVVNALSKQRAMLENILRACVGLAPENNMILEYK</sequence>
<accession>Q40271</accession>